<evidence type="ECO:0000255" key="1">
    <source>
        <dbReference type="HAMAP-Rule" id="MF_01338"/>
    </source>
</evidence>
<reference key="1">
    <citation type="journal article" date="1992" name="J. Mol. Evol.">
        <title>Relative rates of nucleotide substitution at the rbcL locus of monocotyledonous plants.</title>
        <authorList>
            <person name="Gaut B.S."/>
            <person name="Muse S.V."/>
            <person name="Clark W.D."/>
            <person name="Clegg M.T."/>
        </authorList>
    </citation>
    <scope>NUCLEOTIDE SEQUENCE [GENOMIC DNA]</scope>
</reference>
<proteinExistence type="inferred from homology"/>
<accession>P28262</accession>
<geneLocation type="chloroplast"/>
<organism>
    <name type="scientific">Phoenix reclinata</name>
    <name type="common">Senegal date palm</name>
    <name type="synonym">Phoenix senegalensis</name>
    <dbReference type="NCBI Taxonomy" id="4720"/>
    <lineage>
        <taxon>Eukaryota</taxon>
        <taxon>Viridiplantae</taxon>
        <taxon>Streptophyta</taxon>
        <taxon>Embryophyta</taxon>
        <taxon>Tracheophyta</taxon>
        <taxon>Spermatophyta</taxon>
        <taxon>Magnoliopsida</taxon>
        <taxon>Liliopsida</taxon>
        <taxon>Arecaceae</taxon>
        <taxon>Coryphoideae</taxon>
        <taxon>Phoeniceae</taxon>
        <taxon>Phoenix</taxon>
    </lineage>
</organism>
<sequence length="467" mass="51771">MSPQTETKASVGFKAGVKDYKLTYYTPDYETKDTDILAAFRVTPQPGVPPEEAGAAVAAESSTGTWTTVWTDGLTSLDRYKGRCYHIETVVGEENQYIAYVAYPLDLFEEGSVTNMFTSIVGNVFGFKALRALRLEDLRIPTSYSKTFQGPPHGIQVERDKLNKYGRPLLGCTIKPKLGLSAKNYGRAVYECLRGGLDFTKDDENVNSQPFMRWRDRFLFCAEALYKAQAETGEIKGHYLNATAGTCEEMMKRAMCARELGVPIVMHDYLTGGFTANTSLAHYCRDNGLLLHIHRAMHAVIDRQKNHGMHFRVLAKALRMSGGDHIHAGTVVGKLEGEREMTLGFVDLLRDDFIEKDRSRGIFFTQDWVSMPGVLPVASGGIHVWHMPALTEIFGDDSVLQFGGGTLGHPWGNAPGAVANRVALEACVQARNEGRDLAREGNEIIREASKWSPELAAACEVWKAIKF</sequence>
<feature type="propeptide" id="PRO_0000031341" evidence="1">
    <location>
        <begin position="1"/>
        <end position="2"/>
    </location>
</feature>
<feature type="chain" id="PRO_0000031342" description="Ribulose bisphosphate carboxylase large chain">
    <location>
        <begin position="3"/>
        <end position="467" status="greater than"/>
    </location>
</feature>
<feature type="active site" description="Proton acceptor" evidence="1">
    <location>
        <position position="175"/>
    </location>
</feature>
<feature type="active site" description="Proton acceptor" evidence="1">
    <location>
        <position position="294"/>
    </location>
</feature>
<feature type="binding site" description="in homodimeric partner" evidence="1">
    <location>
        <position position="123"/>
    </location>
    <ligand>
        <name>substrate</name>
    </ligand>
</feature>
<feature type="binding site" evidence="1">
    <location>
        <position position="173"/>
    </location>
    <ligand>
        <name>substrate</name>
    </ligand>
</feature>
<feature type="binding site" evidence="1">
    <location>
        <position position="177"/>
    </location>
    <ligand>
        <name>substrate</name>
    </ligand>
</feature>
<feature type="binding site" description="via carbamate group" evidence="1">
    <location>
        <position position="201"/>
    </location>
    <ligand>
        <name>Mg(2+)</name>
        <dbReference type="ChEBI" id="CHEBI:18420"/>
    </ligand>
</feature>
<feature type="binding site" evidence="1">
    <location>
        <position position="203"/>
    </location>
    <ligand>
        <name>Mg(2+)</name>
        <dbReference type="ChEBI" id="CHEBI:18420"/>
    </ligand>
</feature>
<feature type="binding site" evidence="1">
    <location>
        <position position="204"/>
    </location>
    <ligand>
        <name>Mg(2+)</name>
        <dbReference type="ChEBI" id="CHEBI:18420"/>
    </ligand>
</feature>
<feature type="binding site" evidence="1">
    <location>
        <position position="295"/>
    </location>
    <ligand>
        <name>substrate</name>
    </ligand>
</feature>
<feature type="binding site" evidence="1">
    <location>
        <position position="327"/>
    </location>
    <ligand>
        <name>substrate</name>
    </ligand>
</feature>
<feature type="binding site" evidence="1">
    <location>
        <position position="379"/>
    </location>
    <ligand>
        <name>substrate</name>
    </ligand>
</feature>
<feature type="site" description="Transition state stabilizer" evidence="1">
    <location>
        <position position="334"/>
    </location>
</feature>
<feature type="modified residue" description="N-acetylproline" evidence="1">
    <location>
        <position position="3"/>
    </location>
</feature>
<feature type="modified residue" description="N6,N6,N6-trimethyllysine" evidence="1">
    <location>
        <position position="14"/>
    </location>
</feature>
<feature type="modified residue" description="N6-carboxylysine" evidence="1">
    <location>
        <position position="201"/>
    </location>
</feature>
<feature type="disulfide bond" description="Interchain; in linked form" evidence="1">
    <location>
        <position position="247"/>
    </location>
</feature>
<feature type="non-terminal residue">
    <location>
        <position position="467"/>
    </location>
</feature>
<protein>
    <recommendedName>
        <fullName evidence="1">Ribulose bisphosphate carboxylase large chain</fullName>
        <shortName evidence="1">RuBisCO large subunit</shortName>
        <ecNumber evidence="1">4.1.1.39</ecNumber>
    </recommendedName>
</protein>
<dbReference type="EC" id="4.1.1.39" evidence="1"/>
<dbReference type="EMBL" id="M81814">
    <property type="protein sequence ID" value="AAA84556.1"/>
    <property type="molecule type" value="Genomic_DNA"/>
</dbReference>
<dbReference type="SMR" id="P28262"/>
<dbReference type="GO" id="GO:0009507">
    <property type="term" value="C:chloroplast"/>
    <property type="evidence" value="ECO:0007669"/>
    <property type="project" value="UniProtKB-SubCell"/>
</dbReference>
<dbReference type="GO" id="GO:0000287">
    <property type="term" value="F:magnesium ion binding"/>
    <property type="evidence" value="ECO:0007669"/>
    <property type="project" value="InterPro"/>
</dbReference>
<dbReference type="GO" id="GO:0004497">
    <property type="term" value="F:monooxygenase activity"/>
    <property type="evidence" value="ECO:0007669"/>
    <property type="project" value="UniProtKB-KW"/>
</dbReference>
<dbReference type="GO" id="GO:0016984">
    <property type="term" value="F:ribulose-bisphosphate carboxylase activity"/>
    <property type="evidence" value="ECO:0007669"/>
    <property type="project" value="UniProtKB-EC"/>
</dbReference>
<dbReference type="GO" id="GO:0009853">
    <property type="term" value="P:photorespiration"/>
    <property type="evidence" value="ECO:0007669"/>
    <property type="project" value="UniProtKB-KW"/>
</dbReference>
<dbReference type="GO" id="GO:0019253">
    <property type="term" value="P:reductive pentose-phosphate cycle"/>
    <property type="evidence" value="ECO:0007669"/>
    <property type="project" value="UniProtKB-KW"/>
</dbReference>
<dbReference type="CDD" id="cd08212">
    <property type="entry name" value="RuBisCO_large_I"/>
    <property type="match status" value="1"/>
</dbReference>
<dbReference type="FunFam" id="3.20.20.110:FF:000001">
    <property type="entry name" value="Ribulose bisphosphate carboxylase large chain"/>
    <property type="match status" value="1"/>
</dbReference>
<dbReference type="FunFam" id="3.30.70.150:FF:000001">
    <property type="entry name" value="Ribulose bisphosphate carboxylase large chain"/>
    <property type="match status" value="1"/>
</dbReference>
<dbReference type="Gene3D" id="3.20.20.110">
    <property type="entry name" value="Ribulose bisphosphate carboxylase, large subunit, C-terminal domain"/>
    <property type="match status" value="1"/>
</dbReference>
<dbReference type="Gene3D" id="3.30.70.150">
    <property type="entry name" value="RuBisCO large subunit, N-terminal domain"/>
    <property type="match status" value="1"/>
</dbReference>
<dbReference type="HAMAP" id="MF_01338">
    <property type="entry name" value="RuBisCO_L_type1"/>
    <property type="match status" value="1"/>
</dbReference>
<dbReference type="InterPro" id="IPR033966">
    <property type="entry name" value="RuBisCO"/>
</dbReference>
<dbReference type="InterPro" id="IPR020878">
    <property type="entry name" value="RuBisCo_large_chain_AS"/>
</dbReference>
<dbReference type="InterPro" id="IPR000685">
    <property type="entry name" value="RuBisCO_lsu_C"/>
</dbReference>
<dbReference type="InterPro" id="IPR036376">
    <property type="entry name" value="RuBisCO_lsu_C_sf"/>
</dbReference>
<dbReference type="InterPro" id="IPR017443">
    <property type="entry name" value="RuBisCO_lsu_fd_N"/>
</dbReference>
<dbReference type="InterPro" id="IPR036422">
    <property type="entry name" value="RuBisCO_lsu_N_sf"/>
</dbReference>
<dbReference type="InterPro" id="IPR020888">
    <property type="entry name" value="RuBisCO_lsuI"/>
</dbReference>
<dbReference type="NCBIfam" id="NF003252">
    <property type="entry name" value="PRK04208.1"/>
    <property type="match status" value="1"/>
</dbReference>
<dbReference type="PANTHER" id="PTHR42704">
    <property type="entry name" value="RIBULOSE BISPHOSPHATE CARBOXYLASE"/>
    <property type="match status" value="1"/>
</dbReference>
<dbReference type="PANTHER" id="PTHR42704:SF15">
    <property type="entry name" value="RIBULOSE BISPHOSPHATE CARBOXYLASE LARGE CHAIN"/>
    <property type="match status" value="1"/>
</dbReference>
<dbReference type="Pfam" id="PF00016">
    <property type="entry name" value="RuBisCO_large"/>
    <property type="match status" value="1"/>
</dbReference>
<dbReference type="Pfam" id="PF02788">
    <property type="entry name" value="RuBisCO_large_N"/>
    <property type="match status" value="1"/>
</dbReference>
<dbReference type="SFLD" id="SFLDG01052">
    <property type="entry name" value="RuBisCO"/>
    <property type="match status" value="1"/>
</dbReference>
<dbReference type="SFLD" id="SFLDS00014">
    <property type="entry name" value="RuBisCO"/>
    <property type="match status" value="1"/>
</dbReference>
<dbReference type="SFLD" id="SFLDG00301">
    <property type="entry name" value="RuBisCO-like_proteins"/>
    <property type="match status" value="1"/>
</dbReference>
<dbReference type="SUPFAM" id="SSF51649">
    <property type="entry name" value="RuBisCo, C-terminal domain"/>
    <property type="match status" value="1"/>
</dbReference>
<dbReference type="SUPFAM" id="SSF54966">
    <property type="entry name" value="RuBisCO, large subunit, small (N-terminal) domain"/>
    <property type="match status" value="1"/>
</dbReference>
<dbReference type="PROSITE" id="PS00157">
    <property type="entry name" value="RUBISCO_LARGE"/>
    <property type="match status" value="1"/>
</dbReference>
<name>RBL_PHORE</name>
<gene>
    <name evidence="1" type="primary">rbcL</name>
</gene>
<keyword id="KW-0007">Acetylation</keyword>
<keyword id="KW-0113">Calvin cycle</keyword>
<keyword id="KW-0120">Carbon dioxide fixation</keyword>
<keyword id="KW-0150">Chloroplast</keyword>
<keyword id="KW-1015">Disulfide bond</keyword>
<keyword id="KW-0456">Lyase</keyword>
<keyword id="KW-0460">Magnesium</keyword>
<keyword id="KW-0479">Metal-binding</keyword>
<keyword id="KW-0488">Methylation</keyword>
<keyword id="KW-0503">Monooxygenase</keyword>
<keyword id="KW-0560">Oxidoreductase</keyword>
<keyword id="KW-0601">Photorespiration</keyword>
<keyword id="KW-0602">Photosynthesis</keyword>
<keyword id="KW-0934">Plastid</keyword>
<comment type="function">
    <text evidence="1">RuBisCO catalyzes two reactions: the carboxylation of D-ribulose 1,5-bisphosphate, the primary event in carbon dioxide fixation, as well as the oxidative fragmentation of the pentose substrate in the photorespiration process. Both reactions occur simultaneously and in competition at the same active site.</text>
</comment>
<comment type="catalytic activity">
    <reaction evidence="1">
        <text>2 (2R)-3-phosphoglycerate + 2 H(+) = D-ribulose 1,5-bisphosphate + CO2 + H2O</text>
        <dbReference type="Rhea" id="RHEA:23124"/>
        <dbReference type="ChEBI" id="CHEBI:15377"/>
        <dbReference type="ChEBI" id="CHEBI:15378"/>
        <dbReference type="ChEBI" id="CHEBI:16526"/>
        <dbReference type="ChEBI" id="CHEBI:57870"/>
        <dbReference type="ChEBI" id="CHEBI:58272"/>
        <dbReference type="EC" id="4.1.1.39"/>
    </reaction>
</comment>
<comment type="catalytic activity">
    <reaction evidence="1">
        <text>D-ribulose 1,5-bisphosphate + O2 = 2-phosphoglycolate + (2R)-3-phosphoglycerate + 2 H(+)</text>
        <dbReference type="Rhea" id="RHEA:36631"/>
        <dbReference type="ChEBI" id="CHEBI:15378"/>
        <dbReference type="ChEBI" id="CHEBI:15379"/>
        <dbReference type="ChEBI" id="CHEBI:57870"/>
        <dbReference type="ChEBI" id="CHEBI:58033"/>
        <dbReference type="ChEBI" id="CHEBI:58272"/>
    </reaction>
</comment>
<comment type="cofactor">
    <cofactor evidence="1">
        <name>Mg(2+)</name>
        <dbReference type="ChEBI" id="CHEBI:18420"/>
    </cofactor>
    <text evidence="1">Binds 1 Mg(2+) ion per subunit.</text>
</comment>
<comment type="subunit">
    <text evidence="1">Heterohexadecamer of 8 large chains and 8 small chains; disulfide-linked. The disulfide link is formed within the large subunit homodimers.</text>
</comment>
<comment type="subcellular location">
    <subcellularLocation>
        <location>Plastid</location>
        <location>Chloroplast</location>
    </subcellularLocation>
</comment>
<comment type="PTM">
    <text evidence="1">The disulfide bond which can form in the large chain dimeric partners within the hexadecamer appears to be associated with oxidative stress and protein turnover.</text>
</comment>
<comment type="miscellaneous">
    <text evidence="1">The basic functional RuBisCO is composed of a large chain homodimer in a 'head-to-tail' conformation. In form I RuBisCO this homodimer is arranged in a barrel-like tetramer with the small subunits forming a tetrameric 'cap' on each end of the 'barrel'.</text>
</comment>
<comment type="similarity">
    <text evidence="1">Belongs to the RuBisCO large chain family. Type I subfamily.</text>
</comment>